<feature type="initiator methionine" description="Removed" evidence="1">
    <location>
        <position position="1"/>
    </location>
</feature>
<feature type="chain" id="PRO_0000371584" description="Small ribosomal subunit protein uS2">
    <location>
        <begin position="2"/>
        <end position="270"/>
    </location>
</feature>
<dbReference type="EMBL" id="CH479190">
    <property type="protein sequence ID" value="EDW25871.1"/>
    <property type="molecule type" value="Genomic_DNA"/>
</dbReference>
<dbReference type="SMR" id="B4GTK1"/>
<dbReference type="STRING" id="7234.B4GTK1"/>
<dbReference type="EnsemblMetazoa" id="FBtr0179988">
    <property type="protein sequence ID" value="FBpp0178480"/>
    <property type="gene ID" value="FBgn0151978"/>
</dbReference>
<dbReference type="EnsemblMetazoa" id="XM_002021894.2">
    <property type="protein sequence ID" value="XP_002021930.1"/>
    <property type="gene ID" value="LOC6596747"/>
</dbReference>
<dbReference type="GeneID" id="6596747"/>
<dbReference type="KEGG" id="dpe:6596747"/>
<dbReference type="CTD" id="104044"/>
<dbReference type="eggNOG" id="KOG0830">
    <property type="taxonomic scope" value="Eukaryota"/>
</dbReference>
<dbReference type="HOGENOM" id="CLU_058171_1_0_1"/>
<dbReference type="OMA" id="VKNFFEP"/>
<dbReference type="OrthoDB" id="414863at2759"/>
<dbReference type="PhylomeDB" id="B4GTK1"/>
<dbReference type="ChiTaRS" id="sta">
    <property type="organism name" value="fly"/>
</dbReference>
<dbReference type="Proteomes" id="UP000008744">
    <property type="component" value="Unassembled WGS sequence"/>
</dbReference>
<dbReference type="GO" id="GO:0022627">
    <property type="term" value="C:cytosolic small ribosomal subunit"/>
    <property type="evidence" value="ECO:0007669"/>
    <property type="project" value="UniProtKB-UniRule"/>
</dbReference>
<dbReference type="GO" id="GO:0005634">
    <property type="term" value="C:nucleus"/>
    <property type="evidence" value="ECO:0007669"/>
    <property type="project" value="UniProtKB-SubCell"/>
</dbReference>
<dbReference type="GO" id="GO:0043022">
    <property type="term" value="F:ribosome binding"/>
    <property type="evidence" value="ECO:0007669"/>
    <property type="project" value="EnsemblMetazoa"/>
</dbReference>
<dbReference type="GO" id="GO:0003735">
    <property type="term" value="F:structural constituent of ribosome"/>
    <property type="evidence" value="ECO:0007669"/>
    <property type="project" value="UniProtKB-UniRule"/>
</dbReference>
<dbReference type="GO" id="GO:0000028">
    <property type="term" value="P:ribosomal small subunit assembly"/>
    <property type="evidence" value="ECO:0007669"/>
    <property type="project" value="UniProtKB-UniRule"/>
</dbReference>
<dbReference type="GO" id="GO:0006412">
    <property type="term" value="P:translation"/>
    <property type="evidence" value="ECO:0007669"/>
    <property type="project" value="UniProtKB-UniRule"/>
</dbReference>
<dbReference type="CDD" id="cd01425">
    <property type="entry name" value="RPS2"/>
    <property type="match status" value="1"/>
</dbReference>
<dbReference type="FunFam" id="3.40.50.10490:FF:000012">
    <property type="entry name" value="40S ribosomal protein SA"/>
    <property type="match status" value="1"/>
</dbReference>
<dbReference type="Gene3D" id="3.40.50.10490">
    <property type="entry name" value="Glucose-6-phosphate isomerase like protein, domain 1"/>
    <property type="match status" value="1"/>
</dbReference>
<dbReference type="HAMAP" id="MF_03015">
    <property type="entry name" value="Ribosomal_S2_euk"/>
    <property type="match status" value="1"/>
</dbReference>
<dbReference type="InterPro" id="IPR001865">
    <property type="entry name" value="Ribosomal_uS2"/>
</dbReference>
<dbReference type="InterPro" id="IPR032281">
    <property type="entry name" value="Ribosomal_uS2_C"/>
</dbReference>
<dbReference type="InterPro" id="IPR018130">
    <property type="entry name" value="Ribosomal_uS2_CS"/>
</dbReference>
<dbReference type="InterPro" id="IPR027498">
    <property type="entry name" value="Ribosomal_uS2_euk"/>
</dbReference>
<dbReference type="InterPro" id="IPR005707">
    <property type="entry name" value="Ribosomal_uS2_euk/arc"/>
</dbReference>
<dbReference type="InterPro" id="IPR023591">
    <property type="entry name" value="Ribosomal_uS2_flav_dom_sf"/>
</dbReference>
<dbReference type="NCBIfam" id="TIGR01012">
    <property type="entry name" value="uS2_euk_arch"/>
    <property type="match status" value="1"/>
</dbReference>
<dbReference type="PANTHER" id="PTHR11489">
    <property type="entry name" value="40S RIBOSOMAL PROTEIN SA"/>
    <property type="match status" value="1"/>
</dbReference>
<dbReference type="Pfam" id="PF16122">
    <property type="entry name" value="40S_SA_C"/>
    <property type="match status" value="1"/>
</dbReference>
<dbReference type="Pfam" id="PF00318">
    <property type="entry name" value="Ribosomal_S2"/>
    <property type="match status" value="2"/>
</dbReference>
<dbReference type="PRINTS" id="PR00395">
    <property type="entry name" value="RIBOSOMALS2"/>
</dbReference>
<dbReference type="SUPFAM" id="SSF52313">
    <property type="entry name" value="Ribosomal protein S2"/>
    <property type="match status" value="1"/>
</dbReference>
<dbReference type="PROSITE" id="PS00962">
    <property type="entry name" value="RIBOSOMAL_S2_1"/>
    <property type="match status" value="1"/>
</dbReference>
<dbReference type="PROSITE" id="PS00963">
    <property type="entry name" value="RIBOSOMAL_S2_2"/>
    <property type="match status" value="1"/>
</dbReference>
<reference key="1">
    <citation type="journal article" date="2007" name="Nature">
        <title>Evolution of genes and genomes on the Drosophila phylogeny.</title>
        <authorList>
            <consortium name="Drosophila 12 genomes consortium"/>
        </authorList>
    </citation>
    <scope>NUCLEOTIDE SEQUENCE [LARGE SCALE GENOMIC DNA]</scope>
    <source>
        <strain>MSH-3 / Tucson 14011-0111.49</strain>
    </source>
</reference>
<name>RSSA_DROPE</name>
<organism>
    <name type="scientific">Drosophila persimilis</name>
    <name type="common">Fruit fly</name>
    <dbReference type="NCBI Taxonomy" id="7234"/>
    <lineage>
        <taxon>Eukaryota</taxon>
        <taxon>Metazoa</taxon>
        <taxon>Ecdysozoa</taxon>
        <taxon>Arthropoda</taxon>
        <taxon>Hexapoda</taxon>
        <taxon>Insecta</taxon>
        <taxon>Pterygota</taxon>
        <taxon>Neoptera</taxon>
        <taxon>Endopterygota</taxon>
        <taxon>Diptera</taxon>
        <taxon>Brachycera</taxon>
        <taxon>Muscomorpha</taxon>
        <taxon>Ephydroidea</taxon>
        <taxon>Drosophilidae</taxon>
        <taxon>Drosophila</taxon>
        <taxon>Sophophora</taxon>
    </lineage>
</organism>
<sequence>MSGGLDILSLKEDDITKMLVATTHLGSENVNFQMEQYVYKRRADGVNIINLGKTWEKLQLAARAIVAIENASDVFVISSRPIGQRAVLKFAKYTDTTPIAGRFTPGAFTNQIQPAFREPRLLVVTDPMTDHQPIMEASYVNIPVIAFTNTDSPLRYIDIAIPCNNKSAHSIGLMWWLLAREVLRLRGTISRTVEWPVVVDLYFYRDPEEAEKEEAAAKELLPPPKIEEVVDHPVEETTNWADEVAAETVGGVEDWNEDTVKTSWGSDGQF</sequence>
<gene>
    <name evidence="1" type="primary">sta</name>
    <name type="ORF">GL14373</name>
</gene>
<protein>
    <recommendedName>
        <fullName evidence="1">Small ribosomal subunit protein uS2</fullName>
    </recommendedName>
    <alternativeName>
        <fullName evidence="2">40S ribosomal protein SA</fullName>
    </alternativeName>
    <alternativeName>
        <fullName evidence="1">Protein stubarista</fullName>
    </alternativeName>
</protein>
<evidence type="ECO:0000255" key="1">
    <source>
        <dbReference type="HAMAP-Rule" id="MF_03015"/>
    </source>
</evidence>
<evidence type="ECO:0000305" key="2"/>
<accession>B4GTK1</accession>
<comment type="function">
    <text evidence="1">Required for the assembly and/or stability of the 40S ribosomal subunit. Required for the processing of the 20S rRNA-precursor to mature 18S rRNA in a late step of the maturation of 40S ribosomal subunits. Required during oogenesis and imaginal development.</text>
</comment>
<comment type="subunit">
    <text evidence="1">Component of the small ribosomal subunit. Mature ribosomes consist of a small (40S) and a large (60S) subunit. The 40S subunit contains about 33 different proteins and 1 molecule of RNA (18S). The 60S subunit contains about 49 different proteins and 3 molecules of RNA (28S, 5.8S and 5S). Interacts with oho23B/rpS21.</text>
</comment>
<comment type="subcellular location">
    <subcellularLocation>
        <location evidence="1">Cytoplasm</location>
    </subcellularLocation>
    <subcellularLocation>
        <location evidence="1">Nucleus</location>
    </subcellularLocation>
    <text evidence="1">May associate with nascent RNP complexes within the nucleus.</text>
</comment>
<comment type="similarity">
    <text evidence="1">Belongs to the universal ribosomal protein uS2 family.</text>
</comment>
<keyword id="KW-0963">Cytoplasm</keyword>
<keyword id="KW-0217">Developmental protein</keyword>
<keyword id="KW-0539">Nucleus</keyword>
<keyword id="KW-1185">Reference proteome</keyword>
<keyword id="KW-0687">Ribonucleoprotein</keyword>
<keyword id="KW-0689">Ribosomal protein</keyword>
<proteinExistence type="inferred from homology"/>